<keyword id="KW-0143">Chaperone</keyword>
<keyword id="KW-0963">Cytoplasm</keyword>
<keyword id="KW-0996">Nickel insertion</keyword>
<keyword id="KW-1185">Reference proteome</keyword>
<dbReference type="EMBL" id="CP000951">
    <property type="protein sequence ID" value="ACB00105.1"/>
    <property type="molecule type" value="Genomic_DNA"/>
</dbReference>
<dbReference type="RefSeq" id="WP_012307725.1">
    <property type="nucleotide sequence ID" value="NZ_JAHHPU010000017.1"/>
</dbReference>
<dbReference type="SMR" id="B1XIC0"/>
<dbReference type="STRING" id="32049.SYNPCC7002_A2123"/>
<dbReference type="KEGG" id="syp:SYNPCC7002_A2123"/>
<dbReference type="eggNOG" id="COG0829">
    <property type="taxonomic scope" value="Bacteria"/>
</dbReference>
<dbReference type="HOGENOM" id="CLU_056339_0_0_3"/>
<dbReference type="Proteomes" id="UP000001688">
    <property type="component" value="Chromosome"/>
</dbReference>
<dbReference type="GO" id="GO:0005737">
    <property type="term" value="C:cytoplasm"/>
    <property type="evidence" value="ECO:0007669"/>
    <property type="project" value="UniProtKB-SubCell"/>
</dbReference>
<dbReference type="GO" id="GO:0016151">
    <property type="term" value="F:nickel cation binding"/>
    <property type="evidence" value="ECO:0007669"/>
    <property type="project" value="UniProtKB-UniRule"/>
</dbReference>
<dbReference type="HAMAP" id="MF_01384">
    <property type="entry name" value="UreD"/>
    <property type="match status" value="1"/>
</dbReference>
<dbReference type="InterPro" id="IPR002669">
    <property type="entry name" value="UreD"/>
</dbReference>
<dbReference type="PANTHER" id="PTHR33643">
    <property type="entry name" value="UREASE ACCESSORY PROTEIN D"/>
    <property type="match status" value="1"/>
</dbReference>
<dbReference type="PANTHER" id="PTHR33643:SF1">
    <property type="entry name" value="UREASE ACCESSORY PROTEIN D"/>
    <property type="match status" value="1"/>
</dbReference>
<dbReference type="Pfam" id="PF01774">
    <property type="entry name" value="UreD"/>
    <property type="match status" value="1"/>
</dbReference>
<gene>
    <name evidence="1" type="primary">ureD</name>
    <name type="ordered locus">SYNPCC7002_A2123</name>
</gene>
<accession>B1XIC0</accession>
<sequence>MQDQQQVIHKAQPWHGKVGLIYGQRQGKTEMQRCFTQAPFRIQRPFYPEGNRVCHTVLLHTAGGIVGGDRLSLDLELKPESHVFLTTAAANKIYRTNGETAQQDGIIHQAPGSILEYFPQEMIIFDGAEYHQSLRVNLAPGAVWCGWEVLRFGRTARGEKFISGNWRGLTEIWQDDELLWGDRQWLPGHPEVFAAWNGLNNQPVVGSLALVGLEISEAQMAELRQTMATIQQGLGGITQLPKGVLCRYRGPSSTEVKRWFISLWQNWRSLYSPQPPTLSRVWQTY</sequence>
<evidence type="ECO:0000255" key="1">
    <source>
        <dbReference type="HAMAP-Rule" id="MF_01384"/>
    </source>
</evidence>
<proteinExistence type="inferred from homology"/>
<name>URED_PICP2</name>
<feature type="chain" id="PRO_0000346610" description="Urease accessory protein UreD">
    <location>
        <begin position="1"/>
        <end position="285"/>
    </location>
</feature>
<reference key="1">
    <citation type="submission" date="2008-02" db="EMBL/GenBank/DDBJ databases">
        <title>Complete sequence of Synechococcus sp. PCC 7002.</title>
        <authorList>
            <person name="Li T."/>
            <person name="Zhao J."/>
            <person name="Zhao C."/>
            <person name="Liu Z."/>
            <person name="Zhao F."/>
            <person name="Marquardt J."/>
            <person name="Nomura C.T."/>
            <person name="Persson S."/>
            <person name="Detter J.C."/>
            <person name="Richardson P.M."/>
            <person name="Lanz C."/>
            <person name="Schuster S.C."/>
            <person name="Wang J."/>
            <person name="Li S."/>
            <person name="Huang X."/>
            <person name="Cai T."/>
            <person name="Yu Z."/>
            <person name="Luo J."/>
            <person name="Zhao J."/>
            <person name="Bryant D.A."/>
        </authorList>
    </citation>
    <scope>NUCLEOTIDE SEQUENCE [LARGE SCALE GENOMIC DNA]</scope>
    <source>
        <strain>ATCC 27264 / PCC 7002 / PR-6</strain>
    </source>
</reference>
<protein>
    <recommendedName>
        <fullName evidence="1">Urease accessory protein UreD</fullName>
    </recommendedName>
</protein>
<comment type="function">
    <text evidence="1">Required for maturation of urease via the functional incorporation of the urease nickel metallocenter.</text>
</comment>
<comment type="subunit">
    <text evidence="1">UreD, UreF and UreG form a complex that acts as a GTP-hydrolysis-dependent molecular chaperone, activating the urease apoprotein by helping to assemble the nickel containing metallocenter of UreC. The UreE protein probably delivers the nickel.</text>
</comment>
<comment type="subcellular location">
    <subcellularLocation>
        <location evidence="1">Cytoplasm</location>
    </subcellularLocation>
</comment>
<comment type="similarity">
    <text evidence="1">Belongs to the UreD family.</text>
</comment>
<organism>
    <name type="scientific">Picosynechococcus sp. (strain ATCC 27264 / PCC 7002 / PR-6)</name>
    <name type="common">Agmenellum quadruplicatum</name>
    <dbReference type="NCBI Taxonomy" id="32049"/>
    <lineage>
        <taxon>Bacteria</taxon>
        <taxon>Bacillati</taxon>
        <taxon>Cyanobacteriota</taxon>
        <taxon>Cyanophyceae</taxon>
        <taxon>Oscillatoriophycideae</taxon>
        <taxon>Chroococcales</taxon>
        <taxon>Geminocystaceae</taxon>
        <taxon>Picosynechococcus</taxon>
    </lineage>
</organism>